<keyword id="KW-0285">Flavoprotein</keyword>
<keyword id="KW-0288">FMN</keyword>
<keyword id="KW-0520">NAD</keyword>
<keyword id="KW-0560">Oxidoreductase</keyword>
<sequence length="213" mass="24457">MNKTLIINAHPKVDDTSSVSIKVFNHFLESYTELIPNNETIEQINLYDDVVPMIDKTVLSAWEEQGNGQQLTDEEQKVTERMSEILQQFKSANTYVIVLPLHNFNIPSKLKDYMDNIMIARETFKYTETGSVGLLKDGRRMLVIQASGSIYTNDDWYTDVEYSHKYLKAMFNFLGIEDYQIVRAQGTAVLDPNEVLQNAYKEVKEAASRLANK</sequence>
<comment type="function">
    <text evidence="1">Quinone reductase that provides resistance to thiol-specific stress caused by electrophilic quinones.</text>
</comment>
<comment type="function">
    <text evidence="1">Also exhibits azoreductase activity. Catalyzes the reductive cleavage of the azo bond in aromatic azo compounds to the corresponding amines.</text>
</comment>
<comment type="catalytic activity">
    <reaction evidence="1">
        <text>2 a quinone + NADH + H(+) = 2 a 1,4-benzosemiquinone + NAD(+)</text>
        <dbReference type="Rhea" id="RHEA:65952"/>
        <dbReference type="ChEBI" id="CHEBI:15378"/>
        <dbReference type="ChEBI" id="CHEBI:57540"/>
        <dbReference type="ChEBI" id="CHEBI:57945"/>
        <dbReference type="ChEBI" id="CHEBI:132124"/>
        <dbReference type="ChEBI" id="CHEBI:134225"/>
    </reaction>
</comment>
<comment type="catalytic activity">
    <reaction evidence="1">
        <text>N,N-dimethyl-1,4-phenylenediamine + anthranilate + 2 NAD(+) = 2-(4-dimethylaminophenyl)diazenylbenzoate + 2 NADH + 2 H(+)</text>
        <dbReference type="Rhea" id="RHEA:55872"/>
        <dbReference type="ChEBI" id="CHEBI:15378"/>
        <dbReference type="ChEBI" id="CHEBI:15783"/>
        <dbReference type="ChEBI" id="CHEBI:16567"/>
        <dbReference type="ChEBI" id="CHEBI:57540"/>
        <dbReference type="ChEBI" id="CHEBI:57945"/>
        <dbReference type="ChEBI" id="CHEBI:71579"/>
        <dbReference type="EC" id="1.7.1.17"/>
    </reaction>
</comment>
<comment type="cofactor">
    <cofactor evidence="1">
        <name>FMN</name>
        <dbReference type="ChEBI" id="CHEBI:58210"/>
    </cofactor>
    <text evidence="1">Binds 1 FMN per subunit.</text>
</comment>
<comment type="subunit">
    <text evidence="1">Homodimer.</text>
</comment>
<comment type="similarity">
    <text evidence="1">Belongs to the azoreductase type 1 family.</text>
</comment>
<name>AZOR1_BACC1</name>
<accession>Q73CJ5</accession>
<reference key="1">
    <citation type="journal article" date="2004" name="Nucleic Acids Res.">
        <title>The genome sequence of Bacillus cereus ATCC 10987 reveals metabolic adaptations and a large plasmid related to Bacillus anthracis pXO1.</title>
        <authorList>
            <person name="Rasko D.A."/>
            <person name="Ravel J."/>
            <person name="Oekstad O.A."/>
            <person name="Helgason E."/>
            <person name="Cer R.Z."/>
            <person name="Jiang L."/>
            <person name="Shores K.A."/>
            <person name="Fouts D.E."/>
            <person name="Tourasse N.J."/>
            <person name="Angiuoli S.V."/>
            <person name="Kolonay J.F."/>
            <person name="Nelson W.C."/>
            <person name="Kolstoe A.-B."/>
            <person name="Fraser C.M."/>
            <person name="Read T.D."/>
        </authorList>
    </citation>
    <scope>NUCLEOTIDE SEQUENCE [LARGE SCALE GENOMIC DNA]</scope>
    <source>
        <strain>ATCC 10987 / NRS 248</strain>
    </source>
</reference>
<proteinExistence type="inferred from homology"/>
<organism>
    <name type="scientific">Bacillus cereus (strain ATCC 10987 / NRS 248)</name>
    <dbReference type="NCBI Taxonomy" id="222523"/>
    <lineage>
        <taxon>Bacteria</taxon>
        <taxon>Bacillati</taxon>
        <taxon>Bacillota</taxon>
        <taxon>Bacilli</taxon>
        <taxon>Bacillales</taxon>
        <taxon>Bacillaceae</taxon>
        <taxon>Bacillus</taxon>
        <taxon>Bacillus cereus group</taxon>
    </lineage>
</organism>
<evidence type="ECO:0000255" key="1">
    <source>
        <dbReference type="HAMAP-Rule" id="MF_01216"/>
    </source>
</evidence>
<protein>
    <recommendedName>
        <fullName evidence="1">FMN-dependent NADH:quinone oxidoreductase 1</fullName>
        <ecNumber evidence="1">1.6.5.-</ecNumber>
    </recommendedName>
    <alternativeName>
        <fullName evidence="1">Azo-dye reductase 1</fullName>
    </alternativeName>
    <alternativeName>
        <fullName evidence="1">FMN-dependent NADH-azo compound oxidoreductase 1</fullName>
    </alternativeName>
    <alternativeName>
        <fullName evidence="1">FMN-dependent NADH-azoreductase 1</fullName>
        <ecNumber evidence="1">1.7.1.17</ecNumber>
    </alternativeName>
</protein>
<dbReference type="EC" id="1.6.5.-" evidence="1"/>
<dbReference type="EC" id="1.7.1.17" evidence="1"/>
<dbReference type="EMBL" id="AE017194">
    <property type="protein sequence ID" value="AAS40001.1"/>
    <property type="molecule type" value="Genomic_DNA"/>
</dbReference>
<dbReference type="SMR" id="Q73CJ5"/>
<dbReference type="KEGG" id="bca:BCE_1070"/>
<dbReference type="HOGENOM" id="CLU_088964_3_0_9"/>
<dbReference type="Proteomes" id="UP000002527">
    <property type="component" value="Chromosome"/>
</dbReference>
<dbReference type="GO" id="GO:0009055">
    <property type="term" value="F:electron transfer activity"/>
    <property type="evidence" value="ECO:0007669"/>
    <property type="project" value="UniProtKB-UniRule"/>
</dbReference>
<dbReference type="GO" id="GO:0010181">
    <property type="term" value="F:FMN binding"/>
    <property type="evidence" value="ECO:0007669"/>
    <property type="project" value="UniProtKB-UniRule"/>
</dbReference>
<dbReference type="GO" id="GO:0016652">
    <property type="term" value="F:oxidoreductase activity, acting on NAD(P)H as acceptor"/>
    <property type="evidence" value="ECO:0007669"/>
    <property type="project" value="UniProtKB-UniRule"/>
</dbReference>
<dbReference type="GO" id="GO:0016655">
    <property type="term" value="F:oxidoreductase activity, acting on NAD(P)H, quinone or similar compound as acceptor"/>
    <property type="evidence" value="ECO:0007669"/>
    <property type="project" value="InterPro"/>
</dbReference>
<dbReference type="Gene3D" id="3.40.50.360">
    <property type="match status" value="1"/>
</dbReference>
<dbReference type="HAMAP" id="MF_01216">
    <property type="entry name" value="Azoreductase_type1"/>
    <property type="match status" value="1"/>
</dbReference>
<dbReference type="InterPro" id="IPR003680">
    <property type="entry name" value="Flavodoxin_fold"/>
</dbReference>
<dbReference type="InterPro" id="IPR029039">
    <property type="entry name" value="Flavoprotein-like_sf"/>
</dbReference>
<dbReference type="InterPro" id="IPR050104">
    <property type="entry name" value="FMN-dep_NADH:Q_OxRdtase_AzoR1"/>
</dbReference>
<dbReference type="InterPro" id="IPR023048">
    <property type="entry name" value="NADH:quinone_OxRdtase_FMN_depd"/>
</dbReference>
<dbReference type="PANTHER" id="PTHR43741">
    <property type="entry name" value="FMN-DEPENDENT NADH-AZOREDUCTASE 1"/>
    <property type="match status" value="1"/>
</dbReference>
<dbReference type="PANTHER" id="PTHR43741:SF7">
    <property type="entry name" value="FMN-DEPENDENT NADH:QUINONE OXIDOREDUCTASE"/>
    <property type="match status" value="1"/>
</dbReference>
<dbReference type="Pfam" id="PF02525">
    <property type="entry name" value="Flavodoxin_2"/>
    <property type="match status" value="1"/>
</dbReference>
<dbReference type="SUPFAM" id="SSF52218">
    <property type="entry name" value="Flavoproteins"/>
    <property type="match status" value="1"/>
</dbReference>
<gene>
    <name evidence="1" type="primary">azoR1</name>
    <name type="ordered locus">BCE_1070</name>
</gene>
<feature type="chain" id="PRO_0000245877" description="FMN-dependent NADH:quinone oxidoreductase 1">
    <location>
        <begin position="1"/>
        <end position="213"/>
    </location>
</feature>
<feature type="binding site" evidence="1">
    <location>
        <begin position="18"/>
        <end position="20"/>
    </location>
    <ligand>
        <name>FMN</name>
        <dbReference type="ChEBI" id="CHEBI:58210"/>
    </ligand>
</feature>